<evidence type="ECO:0000255" key="1">
    <source>
        <dbReference type="HAMAP-Rule" id="MF_00519"/>
    </source>
</evidence>
<comment type="function">
    <text evidence="1">Catalyzes the conversion of L-arabinose to L-ribulose.</text>
</comment>
<comment type="catalytic activity">
    <reaction evidence="1">
        <text>beta-L-arabinopyranose = L-ribulose</text>
        <dbReference type="Rhea" id="RHEA:14821"/>
        <dbReference type="ChEBI" id="CHEBI:16880"/>
        <dbReference type="ChEBI" id="CHEBI:40886"/>
        <dbReference type="EC" id="5.3.1.4"/>
    </reaction>
</comment>
<comment type="cofactor">
    <cofactor evidence="1">
        <name>Mn(2+)</name>
        <dbReference type="ChEBI" id="CHEBI:29035"/>
    </cofactor>
    <text evidence="1">Binds 1 Mn(2+) ion per subunit.</text>
</comment>
<comment type="pathway">
    <text evidence="1">Carbohydrate degradation; L-arabinose degradation via L-ribulose; D-xylulose 5-phosphate from L-arabinose (bacterial route): step 1/3.</text>
</comment>
<comment type="similarity">
    <text evidence="1">Belongs to the arabinose isomerase family.</text>
</comment>
<gene>
    <name evidence="1" type="primary">araA</name>
    <name type="ordered locus">BL0272</name>
</gene>
<keyword id="KW-0054">Arabinose catabolism</keyword>
<keyword id="KW-0119">Carbohydrate metabolism</keyword>
<keyword id="KW-0413">Isomerase</keyword>
<keyword id="KW-0464">Manganese</keyword>
<keyword id="KW-0479">Metal-binding</keyword>
<keyword id="KW-1185">Reference proteome</keyword>
<accession>Q8G7J3</accession>
<protein>
    <recommendedName>
        <fullName evidence="1">L-arabinose isomerase</fullName>
        <ecNumber evidence="1">5.3.1.4</ecNumber>
    </recommendedName>
</protein>
<feature type="chain" id="PRO_0000312604" description="L-arabinose isomerase">
    <location>
        <begin position="1"/>
        <end position="505"/>
    </location>
</feature>
<feature type="binding site" evidence="1">
    <location>
        <position position="308"/>
    </location>
    <ligand>
        <name>Mn(2+)</name>
        <dbReference type="ChEBI" id="CHEBI:29035"/>
    </ligand>
</feature>
<feature type="binding site" evidence="1">
    <location>
        <position position="335"/>
    </location>
    <ligand>
        <name>Mn(2+)</name>
        <dbReference type="ChEBI" id="CHEBI:29035"/>
    </ligand>
</feature>
<feature type="binding site" evidence="1">
    <location>
        <position position="352"/>
    </location>
    <ligand>
        <name>Mn(2+)</name>
        <dbReference type="ChEBI" id="CHEBI:29035"/>
    </ligand>
</feature>
<feature type="binding site" evidence="1">
    <location>
        <position position="453"/>
    </location>
    <ligand>
        <name>Mn(2+)</name>
        <dbReference type="ChEBI" id="CHEBI:29035"/>
    </ligand>
</feature>
<proteinExistence type="inferred from homology"/>
<reference key="1">
    <citation type="journal article" date="2002" name="Proc. Natl. Acad. Sci. U.S.A.">
        <title>The genome sequence of Bifidobacterium longum reflects its adaptation to the human gastrointestinal tract.</title>
        <authorList>
            <person name="Schell M.A."/>
            <person name="Karmirantzou M."/>
            <person name="Snel B."/>
            <person name="Vilanova D."/>
            <person name="Berger B."/>
            <person name="Pessi G."/>
            <person name="Zwahlen M.-C."/>
            <person name="Desiere F."/>
            <person name="Bork P."/>
            <person name="Delley M."/>
            <person name="Pridmore R.D."/>
            <person name="Arigoni F."/>
        </authorList>
    </citation>
    <scope>NUCLEOTIDE SEQUENCE [LARGE SCALE GENOMIC DNA]</scope>
    <source>
        <strain>NCC 2705</strain>
    </source>
</reference>
<dbReference type="EC" id="5.3.1.4" evidence="1"/>
<dbReference type="EMBL" id="AE014295">
    <property type="protein sequence ID" value="AAN24113.1"/>
    <property type="molecule type" value="Genomic_DNA"/>
</dbReference>
<dbReference type="RefSeq" id="NP_695477.1">
    <property type="nucleotide sequence ID" value="NC_004307.2"/>
</dbReference>
<dbReference type="RefSeq" id="WP_007051388.1">
    <property type="nucleotide sequence ID" value="NC_004307.2"/>
</dbReference>
<dbReference type="SMR" id="Q8G7J3"/>
<dbReference type="STRING" id="206672.BL0272"/>
<dbReference type="EnsemblBacteria" id="AAN24113">
    <property type="protein sequence ID" value="AAN24113"/>
    <property type="gene ID" value="BL0272"/>
</dbReference>
<dbReference type="GeneID" id="69577588"/>
<dbReference type="KEGG" id="blo:BL0272"/>
<dbReference type="PATRIC" id="fig|206672.9.peg.1008"/>
<dbReference type="HOGENOM" id="CLU_045663_0_0_11"/>
<dbReference type="OrthoDB" id="9765600at2"/>
<dbReference type="PhylomeDB" id="Q8G7J3"/>
<dbReference type="BRENDA" id="5.3.1.4">
    <property type="organism ID" value="851"/>
</dbReference>
<dbReference type="UniPathway" id="UPA00145">
    <property type="reaction ID" value="UER00565"/>
</dbReference>
<dbReference type="Proteomes" id="UP000000439">
    <property type="component" value="Chromosome"/>
</dbReference>
<dbReference type="GO" id="GO:0005829">
    <property type="term" value="C:cytosol"/>
    <property type="evidence" value="ECO:0007669"/>
    <property type="project" value="TreeGrafter"/>
</dbReference>
<dbReference type="GO" id="GO:0008733">
    <property type="term" value="F:L-arabinose isomerase activity"/>
    <property type="evidence" value="ECO:0007669"/>
    <property type="project" value="UniProtKB-UniRule"/>
</dbReference>
<dbReference type="GO" id="GO:0030145">
    <property type="term" value="F:manganese ion binding"/>
    <property type="evidence" value="ECO:0007669"/>
    <property type="project" value="UniProtKB-UniRule"/>
</dbReference>
<dbReference type="GO" id="GO:0019569">
    <property type="term" value="P:L-arabinose catabolic process to xylulose 5-phosphate"/>
    <property type="evidence" value="ECO:0007669"/>
    <property type="project" value="UniProtKB-UniRule"/>
</dbReference>
<dbReference type="Gene3D" id="3.40.50.10940">
    <property type="match status" value="1"/>
</dbReference>
<dbReference type="HAMAP" id="MF_00519">
    <property type="entry name" value="Arabinose_Isome"/>
    <property type="match status" value="1"/>
</dbReference>
<dbReference type="InterPro" id="IPR024664">
    <property type="entry name" value="Ara_Isoase_C"/>
</dbReference>
<dbReference type="InterPro" id="IPR055390">
    <property type="entry name" value="AraA_central"/>
</dbReference>
<dbReference type="InterPro" id="IPR055389">
    <property type="entry name" value="AraA_N"/>
</dbReference>
<dbReference type="InterPro" id="IPR038583">
    <property type="entry name" value="AraA_N_sf"/>
</dbReference>
<dbReference type="InterPro" id="IPR004216">
    <property type="entry name" value="Fuc/Ara_isomerase_C"/>
</dbReference>
<dbReference type="InterPro" id="IPR009015">
    <property type="entry name" value="Fucose_isomerase_N/cen_sf"/>
</dbReference>
<dbReference type="InterPro" id="IPR003762">
    <property type="entry name" value="Lara_isomerase"/>
</dbReference>
<dbReference type="NCBIfam" id="NF002795">
    <property type="entry name" value="PRK02929.1"/>
    <property type="match status" value="1"/>
</dbReference>
<dbReference type="PANTHER" id="PTHR38464">
    <property type="entry name" value="L-ARABINOSE ISOMERASE"/>
    <property type="match status" value="1"/>
</dbReference>
<dbReference type="PANTHER" id="PTHR38464:SF1">
    <property type="entry name" value="L-ARABINOSE ISOMERASE"/>
    <property type="match status" value="1"/>
</dbReference>
<dbReference type="Pfam" id="PF24856">
    <property type="entry name" value="AraA_central"/>
    <property type="match status" value="1"/>
</dbReference>
<dbReference type="Pfam" id="PF02610">
    <property type="entry name" value="AraA_N"/>
    <property type="match status" value="1"/>
</dbReference>
<dbReference type="Pfam" id="PF11762">
    <property type="entry name" value="Arabinose_Iso_C"/>
    <property type="match status" value="1"/>
</dbReference>
<dbReference type="PIRSF" id="PIRSF001478">
    <property type="entry name" value="L-ara_isomerase"/>
    <property type="match status" value="1"/>
</dbReference>
<dbReference type="SUPFAM" id="SSF50443">
    <property type="entry name" value="FucI/AraA C-terminal domain-like"/>
    <property type="match status" value="1"/>
</dbReference>
<dbReference type="SUPFAM" id="SSF53743">
    <property type="entry name" value="FucI/AraA N-terminal and middle domains"/>
    <property type="match status" value="1"/>
</dbReference>
<organism>
    <name type="scientific">Bifidobacterium longum (strain NCC 2705)</name>
    <dbReference type="NCBI Taxonomy" id="206672"/>
    <lineage>
        <taxon>Bacteria</taxon>
        <taxon>Bacillati</taxon>
        <taxon>Actinomycetota</taxon>
        <taxon>Actinomycetes</taxon>
        <taxon>Bifidobacteriales</taxon>
        <taxon>Bifidobacteriaceae</taxon>
        <taxon>Bifidobacterium</taxon>
    </lineage>
</organism>
<name>ARAA_BIFLO</name>
<sequence length="505" mass="55868">MVMENPFEGKEIWFGVGSQDLYGEEALRQVAIHSAEMVDYLNNTGKIPAKIVLKPTLKSSDGVKEFMVEASANPNVIGVITWCHTFSPAKMWIRGLEVLTKPLLQLATQHHKEIPWETIDMDFMNLNQAAHGDREFGYIVSRLGIKRKVVVGHYTDPEVAEKLGTWARACAGWDASNNMKVMRWGDNMRNVAVTEGDKTEAERVFGASINTWAVNELVAAYDAVKDDQVKEIIEDYKAKYDVDPALLDAKYDSLFIAAKEEAAMVNMMRANGCTAGVDNFEDLGALPQLPGVGPQRFPSEYGWGFSAEGDWKTAVLVRIGAVMGYGLEGGASLMEDYSYNFTEGDELDMGSHMLEVSPSIGTIAKPKLEIHPLGIGGKADPVRLVFSGKPAKDAVVVSMSDVRERFRLLMDVVDVVEPQGSLKELPCARAVWEPKPSLKTAVECWITAGGSHHTCMTTSVGREAWEDFARIAGVELAVIDENTTARQFEKELELSEMYHRLNNQH</sequence>